<reference key="1">
    <citation type="journal article" date="2001" name="Science">
        <title>Comparative genomics of Listeria species.</title>
        <authorList>
            <person name="Glaser P."/>
            <person name="Frangeul L."/>
            <person name="Buchrieser C."/>
            <person name="Rusniok C."/>
            <person name="Amend A."/>
            <person name="Baquero F."/>
            <person name="Berche P."/>
            <person name="Bloecker H."/>
            <person name="Brandt P."/>
            <person name="Chakraborty T."/>
            <person name="Charbit A."/>
            <person name="Chetouani F."/>
            <person name="Couve E."/>
            <person name="de Daruvar A."/>
            <person name="Dehoux P."/>
            <person name="Domann E."/>
            <person name="Dominguez-Bernal G."/>
            <person name="Duchaud E."/>
            <person name="Durant L."/>
            <person name="Dussurget O."/>
            <person name="Entian K.-D."/>
            <person name="Fsihi H."/>
            <person name="Garcia-del Portillo F."/>
            <person name="Garrido P."/>
            <person name="Gautier L."/>
            <person name="Goebel W."/>
            <person name="Gomez-Lopez N."/>
            <person name="Hain T."/>
            <person name="Hauf J."/>
            <person name="Jackson D."/>
            <person name="Jones L.-M."/>
            <person name="Kaerst U."/>
            <person name="Kreft J."/>
            <person name="Kuhn M."/>
            <person name="Kunst F."/>
            <person name="Kurapkat G."/>
            <person name="Madueno E."/>
            <person name="Maitournam A."/>
            <person name="Mata Vicente J."/>
            <person name="Ng E."/>
            <person name="Nedjari H."/>
            <person name="Nordsiek G."/>
            <person name="Novella S."/>
            <person name="de Pablos B."/>
            <person name="Perez-Diaz J.-C."/>
            <person name="Purcell R."/>
            <person name="Remmel B."/>
            <person name="Rose M."/>
            <person name="Schlueter T."/>
            <person name="Simoes N."/>
            <person name="Tierrez A."/>
            <person name="Vazquez-Boland J.-A."/>
            <person name="Voss H."/>
            <person name="Wehland J."/>
            <person name="Cossart P."/>
        </authorList>
    </citation>
    <scope>NUCLEOTIDE SEQUENCE [LARGE SCALE GENOMIC DNA]</scope>
    <source>
        <strain>ATCC BAA-680 / CLIP 11262</strain>
    </source>
</reference>
<comment type="function">
    <text evidence="1">Required for the formation of a threonylcarbamoyl group on adenosine at position 37 (t(6)A37) in tRNAs that read codons beginning with adenine. Is involved in the transfer of the threonylcarbamoyl moiety of threonylcarbamoyl-AMP (TC-AMP) to the N6 group of A37, together with TsaE and TsaB. TsaD likely plays a direct catalytic role in this reaction.</text>
</comment>
<comment type="catalytic activity">
    <reaction evidence="1">
        <text>L-threonylcarbamoyladenylate + adenosine(37) in tRNA = N(6)-L-threonylcarbamoyladenosine(37) in tRNA + AMP + H(+)</text>
        <dbReference type="Rhea" id="RHEA:37059"/>
        <dbReference type="Rhea" id="RHEA-COMP:10162"/>
        <dbReference type="Rhea" id="RHEA-COMP:10163"/>
        <dbReference type="ChEBI" id="CHEBI:15378"/>
        <dbReference type="ChEBI" id="CHEBI:73682"/>
        <dbReference type="ChEBI" id="CHEBI:74411"/>
        <dbReference type="ChEBI" id="CHEBI:74418"/>
        <dbReference type="ChEBI" id="CHEBI:456215"/>
        <dbReference type="EC" id="2.3.1.234"/>
    </reaction>
</comment>
<comment type="cofactor">
    <cofactor evidence="1">
        <name>Fe(2+)</name>
        <dbReference type="ChEBI" id="CHEBI:29033"/>
    </cofactor>
    <text evidence="1">Binds 1 Fe(2+) ion per subunit.</text>
</comment>
<comment type="subcellular location">
    <subcellularLocation>
        <location evidence="1">Cytoplasm</location>
    </subcellularLocation>
</comment>
<comment type="similarity">
    <text evidence="1">Belongs to the KAE1 / TsaD family.</text>
</comment>
<gene>
    <name evidence="1" type="primary">tsaD</name>
    <name type="synonym">gcp</name>
    <name type="ordered locus">lin2181</name>
</gene>
<proteinExistence type="inferred from homology"/>
<sequence length="344" mass="36812">MGGLMKKNTLILGIESSCDETAASVVKNGCEIVSSVVASQIESHKRFGGVVPEIASRHHVEQITLVIEEALKQANVTMDDLDGVAVTEGPGLVGALLIGVNAAKTLAFMHNLPLVGVHHIAGHIYANRFETEFQFPLLSLVVSGGHTELVLMKADNEFEIIGETRDDAAGEAYDKVARTLGLAYPGGVQIDKLAKDGEDTFHFPRAMMDDGSFDFSFSGLKSSFINTLHNLRQRGEEPNPNDMAASFQASVVDVLVSKTIRAAKQHGVKQLLLAGGVAANQGLRERLIQEVKLELPDTELIIPPLSLCGDNAAMIAAAGTVSFLQGKRSNYDMNANPGLLLEDI</sequence>
<name>TSAD_LISIN</name>
<accession>Q929U3</accession>
<protein>
    <recommendedName>
        <fullName evidence="1">tRNA N6-adenosine threonylcarbamoyltransferase</fullName>
        <ecNumber evidence="1">2.3.1.234</ecNumber>
    </recommendedName>
    <alternativeName>
        <fullName evidence="1">N6-L-threonylcarbamoyladenine synthase</fullName>
        <shortName evidence="1">t(6)A synthase</shortName>
    </alternativeName>
    <alternativeName>
        <fullName evidence="1">t(6)A37 threonylcarbamoyladenosine biosynthesis protein TsaD</fullName>
    </alternativeName>
    <alternativeName>
        <fullName evidence="1">tRNA threonylcarbamoyladenosine biosynthesis protein TsaD</fullName>
    </alternativeName>
</protein>
<keyword id="KW-0012">Acyltransferase</keyword>
<keyword id="KW-0963">Cytoplasm</keyword>
<keyword id="KW-0408">Iron</keyword>
<keyword id="KW-0479">Metal-binding</keyword>
<keyword id="KW-0808">Transferase</keyword>
<keyword id="KW-0819">tRNA processing</keyword>
<evidence type="ECO:0000255" key="1">
    <source>
        <dbReference type="HAMAP-Rule" id="MF_01445"/>
    </source>
</evidence>
<feature type="chain" id="PRO_0000303412" description="tRNA N6-adenosine threonylcarbamoyltransferase">
    <location>
        <begin position="1"/>
        <end position="344"/>
    </location>
</feature>
<feature type="binding site" evidence="1">
    <location>
        <position position="119"/>
    </location>
    <ligand>
        <name>Fe cation</name>
        <dbReference type="ChEBI" id="CHEBI:24875"/>
    </ligand>
</feature>
<feature type="binding site" evidence="1">
    <location>
        <position position="123"/>
    </location>
    <ligand>
        <name>Fe cation</name>
        <dbReference type="ChEBI" id="CHEBI:24875"/>
    </ligand>
</feature>
<feature type="binding site" evidence="1">
    <location>
        <begin position="141"/>
        <end position="145"/>
    </location>
    <ligand>
        <name>substrate</name>
    </ligand>
</feature>
<feature type="binding site" evidence="1">
    <location>
        <position position="174"/>
    </location>
    <ligand>
        <name>substrate</name>
    </ligand>
</feature>
<feature type="binding site" evidence="1">
    <location>
        <position position="187"/>
    </location>
    <ligand>
        <name>substrate</name>
    </ligand>
</feature>
<feature type="binding site" evidence="1">
    <location>
        <position position="191"/>
    </location>
    <ligand>
        <name>substrate</name>
    </ligand>
</feature>
<feature type="binding site" evidence="1">
    <location>
        <position position="280"/>
    </location>
    <ligand>
        <name>substrate</name>
    </ligand>
</feature>
<feature type="binding site" evidence="1">
    <location>
        <position position="310"/>
    </location>
    <ligand>
        <name>Fe cation</name>
        <dbReference type="ChEBI" id="CHEBI:24875"/>
    </ligand>
</feature>
<organism>
    <name type="scientific">Listeria innocua serovar 6a (strain ATCC BAA-680 / CLIP 11262)</name>
    <dbReference type="NCBI Taxonomy" id="272626"/>
    <lineage>
        <taxon>Bacteria</taxon>
        <taxon>Bacillati</taxon>
        <taxon>Bacillota</taxon>
        <taxon>Bacilli</taxon>
        <taxon>Bacillales</taxon>
        <taxon>Listeriaceae</taxon>
        <taxon>Listeria</taxon>
    </lineage>
</organism>
<dbReference type="EC" id="2.3.1.234" evidence="1"/>
<dbReference type="EMBL" id="AL596171">
    <property type="protein sequence ID" value="CAC97410.1"/>
    <property type="molecule type" value="Genomic_DNA"/>
</dbReference>
<dbReference type="PIR" id="AB1705">
    <property type="entry name" value="AB1705"/>
</dbReference>
<dbReference type="SMR" id="Q929U3"/>
<dbReference type="STRING" id="272626.gene:17566538"/>
<dbReference type="KEGG" id="lin:lin2181"/>
<dbReference type="eggNOG" id="COG0533">
    <property type="taxonomic scope" value="Bacteria"/>
</dbReference>
<dbReference type="HOGENOM" id="CLU_023208_0_2_9"/>
<dbReference type="Proteomes" id="UP000002513">
    <property type="component" value="Chromosome"/>
</dbReference>
<dbReference type="GO" id="GO:0005737">
    <property type="term" value="C:cytoplasm"/>
    <property type="evidence" value="ECO:0007669"/>
    <property type="project" value="UniProtKB-SubCell"/>
</dbReference>
<dbReference type="GO" id="GO:0005506">
    <property type="term" value="F:iron ion binding"/>
    <property type="evidence" value="ECO:0007669"/>
    <property type="project" value="UniProtKB-UniRule"/>
</dbReference>
<dbReference type="GO" id="GO:0061711">
    <property type="term" value="F:N(6)-L-threonylcarbamoyladenine synthase activity"/>
    <property type="evidence" value="ECO:0007669"/>
    <property type="project" value="UniProtKB-EC"/>
</dbReference>
<dbReference type="GO" id="GO:0002949">
    <property type="term" value="P:tRNA threonylcarbamoyladenosine modification"/>
    <property type="evidence" value="ECO:0007669"/>
    <property type="project" value="UniProtKB-UniRule"/>
</dbReference>
<dbReference type="CDD" id="cd24133">
    <property type="entry name" value="ASKHA_NBD_TsaD_bac"/>
    <property type="match status" value="1"/>
</dbReference>
<dbReference type="FunFam" id="3.30.420.40:FF:000012">
    <property type="entry name" value="tRNA N6-adenosine threonylcarbamoyltransferase"/>
    <property type="match status" value="1"/>
</dbReference>
<dbReference type="FunFam" id="3.30.420.40:FF:000040">
    <property type="entry name" value="tRNA N6-adenosine threonylcarbamoyltransferase"/>
    <property type="match status" value="1"/>
</dbReference>
<dbReference type="Gene3D" id="3.30.420.40">
    <property type="match status" value="2"/>
</dbReference>
<dbReference type="HAMAP" id="MF_01445">
    <property type="entry name" value="TsaD"/>
    <property type="match status" value="1"/>
</dbReference>
<dbReference type="InterPro" id="IPR043129">
    <property type="entry name" value="ATPase_NBD"/>
</dbReference>
<dbReference type="InterPro" id="IPR000905">
    <property type="entry name" value="Gcp-like_dom"/>
</dbReference>
<dbReference type="InterPro" id="IPR017861">
    <property type="entry name" value="KAE1/TsaD"/>
</dbReference>
<dbReference type="InterPro" id="IPR017860">
    <property type="entry name" value="Peptidase_M22_CS"/>
</dbReference>
<dbReference type="InterPro" id="IPR022450">
    <property type="entry name" value="TsaD"/>
</dbReference>
<dbReference type="NCBIfam" id="TIGR00329">
    <property type="entry name" value="gcp_kae1"/>
    <property type="match status" value="1"/>
</dbReference>
<dbReference type="NCBIfam" id="TIGR03723">
    <property type="entry name" value="T6A_TsaD_YgjD"/>
    <property type="match status" value="1"/>
</dbReference>
<dbReference type="PANTHER" id="PTHR11735">
    <property type="entry name" value="TRNA N6-ADENOSINE THREONYLCARBAMOYLTRANSFERASE"/>
    <property type="match status" value="1"/>
</dbReference>
<dbReference type="PANTHER" id="PTHR11735:SF6">
    <property type="entry name" value="TRNA N6-ADENOSINE THREONYLCARBAMOYLTRANSFERASE, MITOCHONDRIAL"/>
    <property type="match status" value="1"/>
</dbReference>
<dbReference type="Pfam" id="PF00814">
    <property type="entry name" value="TsaD"/>
    <property type="match status" value="1"/>
</dbReference>
<dbReference type="PRINTS" id="PR00789">
    <property type="entry name" value="OSIALOPTASE"/>
</dbReference>
<dbReference type="SUPFAM" id="SSF53067">
    <property type="entry name" value="Actin-like ATPase domain"/>
    <property type="match status" value="2"/>
</dbReference>
<dbReference type="PROSITE" id="PS01016">
    <property type="entry name" value="GLYCOPROTEASE"/>
    <property type="match status" value="1"/>
</dbReference>